<organism>
    <name type="scientific">Pasteurella multocida (strain Pm70)</name>
    <dbReference type="NCBI Taxonomy" id="272843"/>
    <lineage>
        <taxon>Bacteria</taxon>
        <taxon>Pseudomonadati</taxon>
        <taxon>Pseudomonadota</taxon>
        <taxon>Gammaproteobacteria</taxon>
        <taxon>Pasteurellales</taxon>
        <taxon>Pasteurellaceae</taxon>
        <taxon>Pasteurella</taxon>
    </lineage>
</organism>
<name>DXR_PASMU</name>
<feature type="chain" id="PRO_0000163687" description="1-deoxy-D-xylulose 5-phosphate reductoisomerase">
    <location>
        <begin position="1"/>
        <end position="405"/>
    </location>
</feature>
<feature type="binding site" evidence="1">
    <location>
        <position position="16"/>
    </location>
    <ligand>
        <name>NADPH</name>
        <dbReference type="ChEBI" id="CHEBI:57783"/>
    </ligand>
</feature>
<feature type="binding site" evidence="1">
    <location>
        <position position="17"/>
    </location>
    <ligand>
        <name>NADPH</name>
        <dbReference type="ChEBI" id="CHEBI:57783"/>
    </ligand>
</feature>
<feature type="binding site" evidence="1">
    <location>
        <position position="18"/>
    </location>
    <ligand>
        <name>NADPH</name>
        <dbReference type="ChEBI" id="CHEBI:57783"/>
    </ligand>
</feature>
<feature type="binding site" evidence="1">
    <location>
        <position position="19"/>
    </location>
    <ligand>
        <name>NADPH</name>
        <dbReference type="ChEBI" id="CHEBI:57783"/>
    </ligand>
</feature>
<feature type="binding site" evidence="1">
    <location>
        <position position="42"/>
    </location>
    <ligand>
        <name>NADPH</name>
        <dbReference type="ChEBI" id="CHEBI:57783"/>
    </ligand>
</feature>
<feature type="binding site" evidence="1">
    <location>
        <position position="43"/>
    </location>
    <ligand>
        <name>NADPH</name>
        <dbReference type="ChEBI" id="CHEBI:57783"/>
    </ligand>
</feature>
<feature type="binding site" evidence="1">
    <location>
        <position position="44"/>
    </location>
    <ligand>
        <name>NADPH</name>
        <dbReference type="ChEBI" id="CHEBI:57783"/>
    </ligand>
</feature>
<feature type="binding site" evidence="1">
    <location>
        <position position="130"/>
    </location>
    <ligand>
        <name>NADPH</name>
        <dbReference type="ChEBI" id="CHEBI:57783"/>
    </ligand>
</feature>
<feature type="binding site" evidence="1">
    <location>
        <position position="131"/>
    </location>
    <ligand>
        <name>1-deoxy-D-xylulose 5-phosphate</name>
        <dbReference type="ChEBI" id="CHEBI:57792"/>
    </ligand>
</feature>
<feature type="binding site" evidence="1">
    <location>
        <position position="132"/>
    </location>
    <ligand>
        <name>NADPH</name>
        <dbReference type="ChEBI" id="CHEBI:57783"/>
    </ligand>
</feature>
<feature type="binding site" evidence="1">
    <location>
        <position position="156"/>
    </location>
    <ligand>
        <name>Mn(2+)</name>
        <dbReference type="ChEBI" id="CHEBI:29035"/>
    </ligand>
</feature>
<feature type="binding site" evidence="1">
    <location>
        <position position="157"/>
    </location>
    <ligand>
        <name>1-deoxy-D-xylulose 5-phosphate</name>
        <dbReference type="ChEBI" id="CHEBI:57792"/>
    </ligand>
</feature>
<feature type="binding site" evidence="1">
    <location>
        <position position="158"/>
    </location>
    <ligand>
        <name>1-deoxy-D-xylulose 5-phosphate</name>
        <dbReference type="ChEBI" id="CHEBI:57792"/>
    </ligand>
</feature>
<feature type="binding site" evidence="1">
    <location>
        <position position="158"/>
    </location>
    <ligand>
        <name>Mn(2+)</name>
        <dbReference type="ChEBI" id="CHEBI:29035"/>
    </ligand>
</feature>
<feature type="binding site" evidence="1">
    <location>
        <position position="192"/>
    </location>
    <ligand>
        <name>1-deoxy-D-xylulose 5-phosphate</name>
        <dbReference type="ChEBI" id="CHEBI:57792"/>
    </ligand>
</feature>
<feature type="binding site" evidence="1">
    <location>
        <position position="215"/>
    </location>
    <ligand>
        <name>1-deoxy-D-xylulose 5-phosphate</name>
        <dbReference type="ChEBI" id="CHEBI:57792"/>
    </ligand>
</feature>
<feature type="binding site" evidence="1">
    <location>
        <position position="221"/>
    </location>
    <ligand>
        <name>NADPH</name>
        <dbReference type="ChEBI" id="CHEBI:57783"/>
    </ligand>
</feature>
<feature type="binding site" evidence="1">
    <location>
        <position position="228"/>
    </location>
    <ligand>
        <name>1-deoxy-D-xylulose 5-phosphate</name>
        <dbReference type="ChEBI" id="CHEBI:57792"/>
    </ligand>
</feature>
<feature type="binding site" evidence="1">
    <location>
        <position position="233"/>
    </location>
    <ligand>
        <name>1-deoxy-D-xylulose 5-phosphate</name>
        <dbReference type="ChEBI" id="CHEBI:57792"/>
    </ligand>
</feature>
<feature type="binding site" evidence="1">
    <location>
        <position position="234"/>
    </location>
    <ligand>
        <name>1-deoxy-D-xylulose 5-phosphate</name>
        <dbReference type="ChEBI" id="CHEBI:57792"/>
    </ligand>
</feature>
<feature type="binding site" evidence="1">
    <location>
        <position position="237"/>
    </location>
    <ligand>
        <name>1-deoxy-D-xylulose 5-phosphate</name>
        <dbReference type="ChEBI" id="CHEBI:57792"/>
    </ligand>
</feature>
<feature type="binding site" evidence="1">
    <location>
        <position position="237"/>
    </location>
    <ligand>
        <name>Mn(2+)</name>
        <dbReference type="ChEBI" id="CHEBI:29035"/>
    </ligand>
</feature>
<dbReference type="EC" id="1.1.1.267" evidence="1"/>
<dbReference type="EMBL" id="AE004439">
    <property type="protein sequence ID" value="AAK04072.1"/>
    <property type="molecule type" value="Genomic_DNA"/>
</dbReference>
<dbReference type="SMR" id="P57985"/>
<dbReference type="STRING" id="272843.PM1988"/>
<dbReference type="EnsemblBacteria" id="AAK04072">
    <property type="protein sequence ID" value="AAK04072"/>
    <property type="gene ID" value="PM1988"/>
</dbReference>
<dbReference type="KEGG" id="pmu:PM1988"/>
<dbReference type="HOGENOM" id="CLU_035714_4_0_6"/>
<dbReference type="UniPathway" id="UPA00056">
    <property type="reaction ID" value="UER00092"/>
</dbReference>
<dbReference type="Proteomes" id="UP000000809">
    <property type="component" value="Chromosome"/>
</dbReference>
<dbReference type="GO" id="GO:0030604">
    <property type="term" value="F:1-deoxy-D-xylulose-5-phosphate reductoisomerase activity"/>
    <property type="evidence" value="ECO:0007669"/>
    <property type="project" value="UniProtKB-UniRule"/>
</dbReference>
<dbReference type="GO" id="GO:0030145">
    <property type="term" value="F:manganese ion binding"/>
    <property type="evidence" value="ECO:0007669"/>
    <property type="project" value="TreeGrafter"/>
</dbReference>
<dbReference type="GO" id="GO:0070402">
    <property type="term" value="F:NADPH binding"/>
    <property type="evidence" value="ECO:0007669"/>
    <property type="project" value="InterPro"/>
</dbReference>
<dbReference type="GO" id="GO:0051484">
    <property type="term" value="P:isopentenyl diphosphate biosynthetic process, methylerythritol 4-phosphate pathway involved in terpenoid biosynthetic process"/>
    <property type="evidence" value="ECO:0007669"/>
    <property type="project" value="TreeGrafter"/>
</dbReference>
<dbReference type="FunFam" id="1.10.1740.10:FF:000004">
    <property type="entry name" value="1-deoxy-D-xylulose 5-phosphate reductoisomerase"/>
    <property type="match status" value="1"/>
</dbReference>
<dbReference type="FunFam" id="3.40.50.720:FF:000045">
    <property type="entry name" value="1-deoxy-D-xylulose 5-phosphate reductoisomerase"/>
    <property type="match status" value="1"/>
</dbReference>
<dbReference type="Gene3D" id="1.10.1740.10">
    <property type="match status" value="1"/>
</dbReference>
<dbReference type="Gene3D" id="3.40.50.720">
    <property type="entry name" value="NAD(P)-binding Rossmann-like Domain"/>
    <property type="match status" value="1"/>
</dbReference>
<dbReference type="HAMAP" id="MF_00183">
    <property type="entry name" value="DXP_reductoisom"/>
    <property type="match status" value="1"/>
</dbReference>
<dbReference type="InterPro" id="IPR003821">
    <property type="entry name" value="DXP_reductoisomerase"/>
</dbReference>
<dbReference type="InterPro" id="IPR013644">
    <property type="entry name" value="DXP_reductoisomerase_C"/>
</dbReference>
<dbReference type="InterPro" id="IPR013512">
    <property type="entry name" value="DXP_reductoisomerase_N"/>
</dbReference>
<dbReference type="InterPro" id="IPR026877">
    <property type="entry name" value="DXPR_C"/>
</dbReference>
<dbReference type="InterPro" id="IPR036169">
    <property type="entry name" value="DXPR_C_sf"/>
</dbReference>
<dbReference type="InterPro" id="IPR036291">
    <property type="entry name" value="NAD(P)-bd_dom_sf"/>
</dbReference>
<dbReference type="NCBIfam" id="TIGR00243">
    <property type="entry name" value="Dxr"/>
    <property type="match status" value="1"/>
</dbReference>
<dbReference type="NCBIfam" id="NF003938">
    <property type="entry name" value="PRK05447.1-1"/>
    <property type="match status" value="1"/>
</dbReference>
<dbReference type="NCBIfam" id="NF009114">
    <property type="entry name" value="PRK12464.1"/>
    <property type="match status" value="1"/>
</dbReference>
<dbReference type="PANTHER" id="PTHR30525">
    <property type="entry name" value="1-DEOXY-D-XYLULOSE 5-PHOSPHATE REDUCTOISOMERASE"/>
    <property type="match status" value="1"/>
</dbReference>
<dbReference type="PANTHER" id="PTHR30525:SF0">
    <property type="entry name" value="1-DEOXY-D-XYLULOSE 5-PHOSPHATE REDUCTOISOMERASE, CHLOROPLASTIC"/>
    <property type="match status" value="1"/>
</dbReference>
<dbReference type="Pfam" id="PF08436">
    <property type="entry name" value="DXP_redisom_C"/>
    <property type="match status" value="1"/>
</dbReference>
<dbReference type="Pfam" id="PF02670">
    <property type="entry name" value="DXP_reductoisom"/>
    <property type="match status" value="1"/>
</dbReference>
<dbReference type="Pfam" id="PF13288">
    <property type="entry name" value="DXPR_C"/>
    <property type="match status" value="1"/>
</dbReference>
<dbReference type="PIRSF" id="PIRSF006205">
    <property type="entry name" value="Dxp_reductismrs"/>
    <property type="match status" value="1"/>
</dbReference>
<dbReference type="SUPFAM" id="SSF69055">
    <property type="entry name" value="1-deoxy-D-xylulose-5-phosphate reductoisomerase, C-terminal domain"/>
    <property type="match status" value="1"/>
</dbReference>
<dbReference type="SUPFAM" id="SSF55347">
    <property type="entry name" value="Glyceraldehyde-3-phosphate dehydrogenase-like, C-terminal domain"/>
    <property type="match status" value="1"/>
</dbReference>
<dbReference type="SUPFAM" id="SSF51735">
    <property type="entry name" value="NAD(P)-binding Rossmann-fold domains"/>
    <property type="match status" value="1"/>
</dbReference>
<protein>
    <recommendedName>
        <fullName evidence="1">1-deoxy-D-xylulose 5-phosphate reductoisomerase</fullName>
        <shortName evidence="1">DXP reductoisomerase</shortName>
        <ecNumber evidence="1">1.1.1.267</ecNumber>
    </recommendedName>
    <alternativeName>
        <fullName evidence="1">1-deoxyxylulose-5-phosphate reductoisomerase</fullName>
    </alternativeName>
    <alternativeName>
        <fullName evidence="1">2-C-methyl-D-erythritol 4-phosphate synthase</fullName>
    </alternativeName>
</protein>
<evidence type="ECO:0000255" key="1">
    <source>
        <dbReference type="HAMAP-Rule" id="MF_00183"/>
    </source>
</evidence>
<sequence length="405" mass="44207">MSISYFMKKIVILGSTGSIGTSTLSVITHNPDKYQVFALVGGRNVELMFQQCLTFQPSFAALDDDVAAKMLAEKLKAHQSQTTVLAGQQAICELAAHPEADMVMAAIVGAAGLLPTLSAVKAGKRVLLANKEALVTCGQLFIDAVRESQAQLLPVDSEHNAIFQSLPPEAQRQIGFCPLSELGISKIVLTGSGGPFRYTPLEQFEQITPAQAVAHPNWSMGKKISVDSATMMNKGLEYIEARWLFNASAEEMEVIIHPQSIIHSMVRYIDGSVIAQMGNPDMRTPIAETMAYPSRTVAGVEPLDFYQLNGLTFIEPDYQRYPCLKLAIDAFSAGQYATTAMNAANEIAVASFLDNKIKFTDIARLNQLVVSKLQPQKIHCIEDVLEVDKKARELSQSIILSFSHP</sequence>
<keyword id="KW-0414">Isoprene biosynthesis</keyword>
<keyword id="KW-0464">Manganese</keyword>
<keyword id="KW-0479">Metal-binding</keyword>
<keyword id="KW-0521">NADP</keyword>
<keyword id="KW-0560">Oxidoreductase</keyword>
<keyword id="KW-1185">Reference proteome</keyword>
<reference key="1">
    <citation type="journal article" date="2001" name="Proc. Natl. Acad. Sci. U.S.A.">
        <title>Complete genomic sequence of Pasteurella multocida Pm70.</title>
        <authorList>
            <person name="May B.J."/>
            <person name="Zhang Q."/>
            <person name="Li L.L."/>
            <person name="Paustian M.L."/>
            <person name="Whittam T.S."/>
            <person name="Kapur V."/>
        </authorList>
    </citation>
    <scope>NUCLEOTIDE SEQUENCE [LARGE SCALE GENOMIC DNA]</scope>
    <source>
        <strain>Pm70</strain>
    </source>
</reference>
<accession>P57985</accession>
<gene>
    <name evidence="1" type="primary">dxr</name>
    <name type="ordered locus">PM1988</name>
</gene>
<comment type="function">
    <text evidence="1">Catalyzes the NADPH-dependent rearrangement and reduction of 1-deoxy-D-xylulose-5-phosphate (DXP) to 2-C-methyl-D-erythritol 4-phosphate (MEP).</text>
</comment>
<comment type="catalytic activity">
    <reaction evidence="1">
        <text>2-C-methyl-D-erythritol 4-phosphate + NADP(+) = 1-deoxy-D-xylulose 5-phosphate + NADPH + H(+)</text>
        <dbReference type="Rhea" id="RHEA:13717"/>
        <dbReference type="ChEBI" id="CHEBI:15378"/>
        <dbReference type="ChEBI" id="CHEBI:57783"/>
        <dbReference type="ChEBI" id="CHEBI:57792"/>
        <dbReference type="ChEBI" id="CHEBI:58262"/>
        <dbReference type="ChEBI" id="CHEBI:58349"/>
        <dbReference type="EC" id="1.1.1.267"/>
    </reaction>
    <physiologicalReaction direction="right-to-left" evidence="1">
        <dbReference type="Rhea" id="RHEA:13719"/>
    </physiologicalReaction>
</comment>
<comment type="cofactor">
    <cofactor evidence="1">
        <name>Mg(2+)</name>
        <dbReference type="ChEBI" id="CHEBI:18420"/>
    </cofactor>
    <cofactor evidence="1">
        <name>Mn(2+)</name>
        <dbReference type="ChEBI" id="CHEBI:29035"/>
    </cofactor>
</comment>
<comment type="pathway">
    <text evidence="1">Isoprenoid biosynthesis; isopentenyl diphosphate biosynthesis via DXP pathway; isopentenyl diphosphate from 1-deoxy-D-xylulose 5-phosphate: step 1/6.</text>
</comment>
<comment type="similarity">
    <text evidence="1">Belongs to the DXR family.</text>
</comment>
<proteinExistence type="inferred from homology"/>